<reference key="1">
    <citation type="journal article" date="1987" name="Gene">
        <title>Genomic organization and primary structure of five homologous pairs of intron-less genes encoding secretory globins from the insect Chironomus thummi thummi.</title>
        <authorList>
            <person name="Antoine M."/>
            <person name="Erbil C."/>
            <person name="Muench E."/>
            <person name="Schnell S."/>
            <person name="Niessing J."/>
        </authorList>
    </citation>
    <scope>NUCLEOTIDE SEQUENCE [GENOMIC DNA]</scope>
</reference>
<reference key="2">
    <citation type="journal article" date="1984" name="Nature">
        <title>Intron-less globin genes in the insect Chironomus thummi thummi.</title>
        <authorList>
            <person name="Antoine M."/>
            <person name="Niessing J."/>
        </authorList>
    </citation>
    <scope>NUCLEOTIDE SEQUENCE [GENOMIC DNA]</scope>
</reference>
<reference key="3">
    <citation type="submission" date="1997-01" db="EMBL/GenBank/DDBJ databases">
        <authorList>
            <person name="Hankeln T."/>
            <person name="Amid C."/>
            <person name="Weich B."/>
            <person name="Schmidt E.R."/>
        </authorList>
    </citation>
    <scope>NUCLEOTIDE SEQUENCE [GENOMIC DNA]</scope>
</reference>
<reference key="4">
    <citation type="journal article" date="1981" name="Hoppe-Seyler's Z. Physiol. Chem.">
        <title>Hemoglobins, XL. Sequence analysis of the monomeric hemoglobin CTT IV (erythrocruorin) of Chironomus thummi thummi, Diptera.</title>
        <authorList>
            <person name="Pfletschinger J."/>
            <person name="Plagens H."/>
            <person name="Braunitzer G."/>
        </authorList>
    </citation>
    <scope>PROTEIN SEQUENCE OF 16-151</scope>
</reference>
<proteinExistence type="evidence at protein level"/>
<feature type="signal peptide" evidence="2">
    <location>
        <begin position="1"/>
        <end position="15"/>
    </location>
</feature>
<feature type="chain" id="PRO_0000011191" description="Globin CTT-IV">
    <location>
        <begin position="16"/>
        <end position="151"/>
    </location>
</feature>
<feature type="domain" description="Globin" evidence="1">
    <location>
        <begin position="16"/>
        <end position="151"/>
    </location>
</feature>
<feature type="binding site" description="proximal binding residue" evidence="1">
    <location>
        <position position="102"/>
    </location>
    <ligand>
        <name>heme b</name>
        <dbReference type="ChEBI" id="CHEBI:60344"/>
    </ligand>
    <ligandPart>
        <name>Fe</name>
        <dbReference type="ChEBI" id="CHEBI:18248"/>
    </ligandPart>
</feature>
<feature type="sequence variant" description="In C and C'.">
    <original>L</original>
    <variation>F</variation>
    <location>
        <position position="3"/>
    </location>
</feature>
<gene>
    <name type="primary">D</name>
</gene>
<gene>
    <name type="primary">D'</name>
</gene>
<gene>
    <name type="primary">C</name>
</gene>
<gene>
    <name type="primary">C'</name>
</gene>
<name>GLB4_CHITH</name>
<dbReference type="EMBL" id="X00920">
    <property type="protein sequence ID" value="CAA25438.1"/>
    <property type="molecule type" value="Genomic_DNA"/>
</dbReference>
<dbReference type="EMBL" id="M17602">
    <property type="protein sequence ID" value="AAA28251.1"/>
    <property type="molecule type" value="Genomic_DNA"/>
</dbReference>
<dbReference type="EMBL" id="M17693">
    <property type="protein sequence ID" value="AAA28256.1"/>
    <property type="molecule type" value="Genomic_DNA"/>
</dbReference>
<dbReference type="EMBL" id="M17603">
    <property type="protein sequence ID" value="AAA28252.1"/>
    <property type="molecule type" value="Genomic_DNA"/>
</dbReference>
<dbReference type="EMBL" id="M17694">
    <property type="protein sequence ID" value="AAA28257.1"/>
    <property type="molecule type" value="Genomic_DNA"/>
</dbReference>
<dbReference type="EMBL" id="Y10622">
    <property type="protein sequence ID" value="CAA71641.1"/>
    <property type="molecule type" value="Genomic_DNA"/>
</dbReference>
<dbReference type="EMBL" id="Y10622">
    <property type="protein sequence ID" value="CAA71642.1"/>
    <property type="molecule type" value="Genomic_DNA"/>
</dbReference>
<dbReference type="PIR" id="A21808">
    <property type="entry name" value="GGICE4"/>
</dbReference>
<dbReference type="SMR" id="P02230"/>
<dbReference type="Allergome" id="201">
    <property type="allergen name" value="Chi t 1"/>
</dbReference>
<dbReference type="Allergome" id="203">
    <property type="allergen name" value="Chi t 1.0201"/>
</dbReference>
<dbReference type="GO" id="GO:0005576">
    <property type="term" value="C:extracellular region"/>
    <property type="evidence" value="ECO:0007669"/>
    <property type="project" value="InterPro"/>
</dbReference>
<dbReference type="GO" id="GO:0005833">
    <property type="term" value="C:hemoglobin complex"/>
    <property type="evidence" value="ECO:0007669"/>
    <property type="project" value="InterPro"/>
</dbReference>
<dbReference type="GO" id="GO:0020037">
    <property type="term" value="F:heme binding"/>
    <property type="evidence" value="ECO:0007669"/>
    <property type="project" value="InterPro"/>
</dbReference>
<dbReference type="GO" id="GO:0046872">
    <property type="term" value="F:metal ion binding"/>
    <property type="evidence" value="ECO:0007669"/>
    <property type="project" value="UniProtKB-KW"/>
</dbReference>
<dbReference type="GO" id="GO:0019825">
    <property type="term" value="F:oxygen binding"/>
    <property type="evidence" value="ECO:0007669"/>
    <property type="project" value="InterPro"/>
</dbReference>
<dbReference type="GO" id="GO:0005344">
    <property type="term" value="F:oxygen carrier activity"/>
    <property type="evidence" value="ECO:0007669"/>
    <property type="project" value="UniProtKB-KW"/>
</dbReference>
<dbReference type="CDD" id="cd01040">
    <property type="entry name" value="Mb-like"/>
    <property type="match status" value="1"/>
</dbReference>
<dbReference type="Gene3D" id="1.10.490.10">
    <property type="entry name" value="Globins"/>
    <property type="match status" value="1"/>
</dbReference>
<dbReference type="InterPro" id="IPR002336">
    <property type="entry name" value="Erythrocruorin"/>
</dbReference>
<dbReference type="InterPro" id="IPR000971">
    <property type="entry name" value="Globin"/>
</dbReference>
<dbReference type="InterPro" id="IPR009050">
    <property type="entry name" value="Globin-like_sf"/>
</dbReference>
<dbReference type="InterPro" id="IPR012292">
    <property type="entry name" value="Globin/Proto"/>
</dbReference>
<dbReference type="InterPro" id="IPR044399">
    <property type="entry name" value="Mb-like_M"/>
</dbReference>
<dbReference type="Pfam" id="PF00042">
    <property type="entry name" value="Globin"/>
    <property type="match status" value="1"/>
</dbReference>
<dbReference type="PRINTS" id="PR00611">
    <property type="entry name" value="ERYTHCRUORIN"/>
</dbReference>
<dbReference type="SUPFAM" id="SSF46458">
    <property type="entry name" value="Globin-like"/>
    <property type="match status" value="1"/>
</dbReference>
<dbReference type="PROSITE" id="PS01033">
    <property type="entry name" value="GLOBIN"/>
    <property type="match status" value="1"/>
</dbReference>
<accession>P02230</accession>
<sequence length="151" mass="15935">MKLLILALCFAAASALTADQISTVQSSFAGVKGDAVGILYAVFKADPSIQAKFTQFAGKDLDSIKGSADFSAHANKIVGFFSKIIGDLPNIDGDVTTFVASHTPRGVTHDQLNNFRAGFVSYMKAHTDFAGAEAAWGATLDAFFGMVFAKM</sequence>
<keyword id="KW-0903">Direct protein sequencing</keyword>
<keyword id="KW-0349">Heme</keyword>
<keyword id="KW-0408">Iron</keyword>
<keyword id="KW-0479">Metal-binding</keyword>
<keyword id="KW-0561">Oxygen transport</keyword>
<keyword id="KW-0732">Signal</keyword>
<keyword id="KW-0813">Transport</keyword>
<organism>
    <name type="scientific">Chironomus thummi thummi</name>
    <name type="common">Midge</name>
    <dbReference type="NCBI Taxonomy" id="7155"/>
    <lineage>
        <taxon>Eukaryota</taxon>
        <taxon>Metazoa</taxon>
        <taxon>Ecdysozoa</taxon>
        <taxon>Arthropoda</taxon>
        <taxon>Hexapoda</taxon>
        <taxon>Insecta</taxon>
        <taxon>Pterygota</taxon>
        <taxon>Neoptera</taxon>
        <taxon>Endopterygota</taxon>
        <taxon>Diptera</taxon>
        <taxon>Nematocera</taxon>
        <taxon>Chironomoidea</taxon>
        <taxon>Chironomidae</taxon>
        <taxon>Chironominae</taxon>
        <taxon>Chironomus</taxon>
    </lineage>
</organism>
<evidence type="ECO:0000255" key="1">
    <source>
        <dbReference type="PROSITE-ProRule" id="PRU00238"/>
    </source>
</evidence>
<evidence type="ECO:0000269" key="2">
    <source>
    </source>
</evidence>
<protein>
    <recommendedName>
        <fullName>Globin CTT-IV</fullName>
    </recommendedName>
</protein>
<comment type="subunit">
    <text>Monomer.</text>
</comment>
<comment type="miscellaneous">
    <text>There are at least 12 different components in Midge globin.</text>
</comment>
<comment type="similarity">
    <text evidence="1">Belongs to the globin family.</text>
</comment>